<name>YCIB_TOLAT</name>
<dbReference type="EMBL" id="CP001616">
    <property type="protein sequence ID" value="ACQ92566.1"/>
    <property type="molecule type" value="Genomic_DNA"/>
</dbReference>
<dbReference type="RefSeq" id="WP_012729165.1">
    <property type="nucleotide sequence ID" value="NC_012691.1"/>
</dbReference>
<dbReference type="STRING" id="595494.Tola_0938"/>
<dbReference type="KEGG" id="tau:Tola_0938"/>
<dbReference type="eggNOG" id="COG2917">
    <property type="taxonomic scope" value="Bacteria"/>
</dbReference>
<dbReference type="HOGENOM" id="CLU_089554_2_0_6"/>
<dbReference type="OrthoDB" id="9788219at2"/>
<dbReference type="Proteomes" id="UP000009073">
    <property type="component" value="Chromosome"/>
</dbReference>
<dbReference type="GO" id="GO:0005886">
    <property type="term" value="C:plasma membrane"/>
    <property type="evidence" value="ECO:0007669"/>
    <property type="project" value="UniProtKB-SubCell"/>
</dbReference>
<dbReference type="HAMAP" id="MF_00189">
    <property type="entry name" value="YciB"/>
    <property type="match status" value="1"/>
</dbReference>
<dbReference type="InterPro" id="IPR006008">
    <property type="entry name" value="YciB"/>
</dbReference>
<dbReference type="NCBIfam" id="TIGR00997">
    <property type="entry name" value="ispZ"/>
    <property type="match status" value="1"/>
</dbReference>
<dbReference type="NCBIfam" id="NF001324">
    <property type="entry name" value="PRK00259.1-2"/>
    <property type="match status" value="1"/>
</dbReference>
<dbReference type="NCBIfam" id="NF001325">
    <property type="entry name" value="PRK00259.1-3"/>
    <property type="match status" value="1"/>
</dbReference>
<dbReference type="PANTHER" id="PTHR36917:SF1">
    <property type="entry name" value="INNER MEMBRANE-SPANNING PROTEIN YCIB"/>
    <property type="match status" value="1"/>
</dbReference>
<dbReference type="PANTHER" id="PTHR36917">
    <property type="entry name" value="INTRACELLULAR SEPTATION PROTEIN A-RELATED"/>
    <property type="match status" value="1"/>
</dbReference>
<dbReference type="Pfam" id="PF04279">
    <property type="entry name" value="IspA"/>
    <property type="match status" value="1"/>
</dbReference>
<comment type="function">
    <text evidence="1">Plays a role in cell envelope biogenesis, maintenance of cell envelope integrity and membrane homeostasis.</text>
</comment>
<comment type="subcellular location">
    <subcellularLocation>
        <location evidence="1">Cell inner membrane</location>
        <topology evidence="1">Multi-pass membrane protein</topology>
    </subcellularLocation>
</comment>
<comment type="similarity">
    <text evidence="1">Belongs to the YciB family.</text>
</comment>
<reference key="1">
    <citation type="submission" date="2009-05" db="EMBL/GenBank/DDBJ databases">
        <title>Complete sequence of Tolumonas auensis DSM 9187.</title>
        <authorList>
            <consortium name="US DOE Joint Genome Institute"/>
            <person name="Lucas S."/>
            <person name="Copeland A."/>
            <person name="Lapidus A."/>
            <person name="Glavina del Rio T."/>
            <person name="Tice H."/>
            <person name="Bruce D."/>
            <person name="Goodwin L."/>
            <person name="Pitluck S."/>
            <person name="Chertkov O."/>
            <person name="Brettin T."/>
            <person name="Detter J.C."/>
            <person name="Han C."/>
            <person name="Larimer F."/>
            <person name="Land M."/>
            <person name="Hauser L."/>
            <person name="Kyrpides N."/>
            <person name="Mikhailova N."/>
            <person name="Spring S."/>
            <person name="Beller H."/>
        </authorList>
    </citation>
    <scope>NUCLEOTIDE SEQUENCE [LARGE SCALE GENOMIC DNA]</scope>
    <source>
        <strain>DSM 9187 / NBRC 110442 / TA 4</strain>
    </source>
</reference>
<keyword id="KW-0997">Cell inner membrane</keyword>
<keyword id="KW-1003">Cell membrane</keyword>
<keyword id="KW-0472">Membrane</keyword>
<keyword id="KW-1185">Reference proteome</keyword>
<keyword id="KW-0812">Transmembrane</keyword>
<keyword id="KW-1133">Transmembrane helix</keyword>
<evidence type="ECO:0000255" key="1">
    <source>
        <dbReference type="HAMAP-Rule" id="MF_00189"/>
    </source>
</evidence>
<accession>C4LC87</accession>
<protein>
    <recommendedName>
        <fullName evidence="1">Inner membrane-spanning protein YciB</fullName>
    </recommendedName>
</protein>
<organism>
    <name type="scientific">Tolumonas auensis (strain DSM 9187 / NBRC 110442 / TA 4)</name>
    <dbReference type="NCBI Taxonomy" id="595494"/>
    <lineage>
        <taxon>Bacteria</taxon>
        <taxon>Pseudomonadati</taxon>
        <taxon>Pseudomonadota</taxon>
        <taxon>Gammaproteobacteria</taxon>
        <taxon>Aeromonadales</taxon>
        <taxon>Aeromonadaceae</taxon>
        <taxon>Tolumonas</taxon>
    </lineage>
</organism>
<gene>
    <name evidence="1" type="primary">yciB</name>
    <name type="ordered locus">Tola_0938</name>
</gene>
<feature type="chain" id="PRO_1000203991" description="Inner membrane-spanning protein YciB">
    <location>
        <begin position="1"/>
        <end position="182"/>
    </location>
</feature>
<feature type="transmembrane region" description="Helical" evidence="1">
    <location>
        <begin position="22"/>
        <end position="42"/>
    </location>
</feature>
<feature type="transmembrane region" description="Helical" evidence="1">
    <location>
        <begin position="53"/>
        <end position="73"/>
    </location>
</feature>
<feature type="transmembrane region" description="Helical" evidence="1">
    <location>
        <begin position="76"/>
        <end position="96"/>
    </location>
</feature>
<feature type="transmembrane region" description="Helical" evidence="1">
    <location>
        <begin position="121"/>
        <end position="141"/>
    </location>
</feature>
<feature type="transmembrane region" description="Helical" evidence="1">
    <location>
        <begin position="149"/>
        <end position="169"/>
    </location>
</feature>
<proteinExistence type="inferred from homology"/>
<sequence length="182" mass="21303">MKQLLDFIPLIIFFTVYKLHDIYAATGALMATTLLQMIVVWVMYKKLERSHWITLVLVLGFGAMTLFFHNEAFIKWKVTVLYAAFGSALWISQFLFRKPLIKKMLGKEMSLPDAVWNRINFSWGLFFWMVGALNVYIAFYLPTEIWVDFKVFGVLGLMLVSTLLTGIYIYRYLPTNNQQDKE</sequence>